<organism>
    <name type="scientific">Rattus norvegicus</name>
    <name type="common">Rat</name>
    <dbReference type="NCBI Taxonomy" id="10116"/>
    <lineage>
        <taxon>Eukaryota</taxon>
        <taxon>Metazoa</taxon>
        <taxon>Chordata</taxon>
        <taxon>Craniata</taxon>
        <taxon>Vertebrata</taxon>
        <taxon>Euteleostomi</taxon>
        <taxon>Mammalia</taxon>
        <taxon>Eutheria</taxon>
        <taxon>Euarchontoglires</taxon>
        <taxon>Glires</taxon>
        <taxon>Rodentia</taxon>
        <taxon>Myomorpha</taxon>
        <taxon>Muroidea</taxon>
        <taxon>Muridae</taxon>
        <taxon>Murinae</taxon>
        <taxon>Rattus</taxon>
    </lineage>
</organism>
<sequence length="589" mass="65031">MGLGSSQPSTKEAEPCTLQEKEEHPVDDTRQQNNAVPATVSDPDQVSPAVQDAETQVESIVDKRKNKKGKTEYLVRWKGYDSEDDTWEPEQHLVNCEEYIHDFNRRHNERQKEGTLARANRASPSNARKQISRSTHSALSKTNPKALVVGKDHESKTNQLLATSQKFRKNTAPSLANRKNMDLAKSGIKILVPKSPIKGRTSIDGFHGESPEKLDQGAEDTVTPEVTAEKPTGALLGPGAERARMGSRPRIHSLVPQVSGPVTAAMATTLAVNGKGTSPFMDALTANGTVTIQTSVTGVTAGKRKFIDDRRDQPFDKRLRFSVRQTESAYRYRDIVVRKQDGFTHILLSTKSSENNSLNPEVMKEVQSALSTAAADDSKLVLLSAVGSVFCCGLDFIYFIRRLTDDRKRESTKMAEAIRNFVNTFIQFKKPIIVAVNGPAIGLGASILPLCDVVWANEKAWFQTPYTTFGQSPDGCSTVMFPKIMGGASANEMLLSGRKLTAQEACGKGLVSQVFWPGTFTQEVMVRIKELASCNPIVLEESKALVRCNMKMELEQANERECDALKKIWGSAQGMDSMLKYLQRKIDEF</sequence>
<protein>
    <recommendedName>
        <fullName evidence="2">Chromodomain Y-like protein</fullName>
        <shortName evidence="2">CDY-like</shortName>
    </recommendedName>
    <alternativeName>
        <fullName evidence="2">Crotonyl-CoA hydratase</fullName>
        <ecNumber evidence="2">4.2.1.-</ecNumber>
    </alternativeName>
    <alternativeName>
        <fullName evidence="8">Putative tubulin acetyltransferase Cdyl</fullName>
        <ecNumber evidence="9">2.3.1.-</ecNumber>
    </alternativeName>
</protein>
<gene>
    <name evidence="10" type="primary">Cdyl</name>
</gene>
<comment type="function">
    <molecule>Isoform 2</molecule>
    <text evidence="1 2 6 9">Chromatin reader protein that recognizes and binds histone H3 trimethylated at 'Lys-9', dimethylated at 'Lys-27' and trimethylated at 'Lys-27' (H3K9me3, H3K27me2 and H3K27me3, respectively). Part of multimeric repressive chromatin complexes, where it is required for transmission and restoration of repressive histone marks, thereby preserving the epigenetic landscape. Required for chromatin targeting and maximal enzymatic activity of Polycomb repressive complex 2 (PRC2); acts as a positive regulator of PRC2 activity by bridging the pre-existing histone H3K27me3 and newly recruited PRC2 on neighboring nucleosomes. Acts as a corepressor for REST by facilitating histone-lysine N-methyltransferase EHMT2 recruitment and H3K9 dimethylation at REST target genes for repression (By similarity). Involved in X chromosome inactivation in females: recruited to Xist RNA-coated X chromosome and facilitates propagation of H3K9me2 by anchoring EHMT2 (By similarity). Promotes EZH2 accumulation and H3K27me3 methylation at DNA double strand breaks (DSBs), thereby facilitating transcriptional repression at sites of DNA damage and homology-directed repair of DSBs (By similarity). Required for neuronal migration during brain development by repressing expression of RHOA (By similarity). By repressing the expression of SCN8A, contributes to the inhibition of intrinsic neuronal excitability and epileptogenesis (PubMed:28842554). In addition to acting as a chromatin reader, acts as a hydro-lyase. Shows crotonyl-coA hydratase activity by mediating the conversion of crotonyl-CoA ((2E)-butenoyl-CoA) to beta-hydroxybutyryl-CoA (3-hydroxybutanoyl-CoA), thereby acting as a negative regulator of histone crotonylation (By similarity). Histone crotonylation is required during spermatogenesis; down-regulation of histone crotonylation by CDYL regulates the reactivation of sex chromosome-linked genes in round spermatids and histone replacement in elongating spermatids (By similarity). By regulating histone crotonylation and trimethylation of H3K27, may be involved in stress-induced depression-like behaviors, possibly by regulating VGF expression (By similarity). Displays acetyltransferase activity toward tubulin in vitro; such activity is however unsure in vivo and additional evidences would be required to confirm this result (PubMed:28681565).</text>
</comment>
<comment type="function">
    <molecule>Isoform 1</molecule>
    <text evidence="2">Not able to recognize and bind histone H3K9me3, histone H3K27me2 and histone H3K27me3, due to the presence of a N-terminal extension that inactivates the chromo domain.</text>
</comment>
<comment type="catalytic activity">
    <reaction evidence="2">
        <text>3-hydroxybutanoyl-CoA = (2E)-butenoyl-CoA + H2O</text>
        <dbReference type="Rhea" id="RHEA:45584"/>
        <dbReference type="ChEBI" id="CHEBI:15377"/>
        <dbReference type="ChEBI" id="CHEBI:57332"/>
        <dbReference type="ChEBI" id="CHEBI:78611"/>
    </reaction>
</comment>
<comment type="subunit">
    <text evidence="1 2">Forms multimers and multimerization is required for stable binding to chromatin (By similarity). Interacts with HDAC1 and HDAC2 via its C-terminal acetyl-CoA-binding domain (By similarity). Interacts with EZH2, EED, SUZ12, REST, EHMT1 and EHMT2. Part of a complex containing at least CDYL, REST, WIZ, SETB1, EHMT1 and EHMT2. Part of a complex containing at least CDYL, MIER1, MIER2, HDAC1 and HDAC2. Interacts with CHAF1A and CHAF1B; bridging the CAF-1 complex to the MCM2-7 (MCM) complex. Interacts with MCM3 and MCM5; bridging the CAF-1 complex to the MCM2-7 (MCM) complex (By similarity). Recruited to Xist RNA-coated X chromosome (By similarity). Interacts with EHMT2 and PRDM9; interaction only takes place when PRDM9 is bound to hotspot DNA (By similarity).</text>
</comment>
<comment type="subcellular location">
    <molecule>Isoform 2</molecule>
    <subcellularLocation>
        <location evidence="2">Nucleus</location>
    </subcellularLocation>
    <subcellularLocation>
        <location evidence="2">Chromosome</location>
    </subcellularLocation>
    <text evidence="2">Recognizes and binds histone H3 trimethylated at 'Lys-9', dimethylated at 'Lys-27' and trimethylated at 'Lys-27' (H3K9me3, H3K27me2 and H3K27me3, respectively) on chromatin. Multimerization is required for chromatin-binding. Recruited to sites of DNA double strand breaks in a PARP1-dependent fashion (By similarity).</text>
</comment>
<comment type="alternative products">
    <event type="alternative splicing"/>
    <isoform>
        <id>Q6AYK9-1</id>
        <name>1</name>
        <name evidence="2">a</name>
        <name evidence="2">CDYL1a</name>
        <sequence type="displayed"/>
    </isoform>
    <isoform>
        <id>Q6AYK9-2</id>
        <name>2</name>
        <name evidence="2">b</name>
        <name evidence="2">CDYL1b</name>
        <sequence type="described" ref="VSP_059157"/>
    </isoform>
</comment>
<comment type="tissue specificity">
    <text evidence="6 7">Expressed in the brain, with expression in the hippocampal dentate gyrus, CA1, striatum and cortex (at protein level) (PubMed:28842554). Expressed in the prelimbic cortex (PubMed:30665597).</text>
</comment>
<comment type="induction">
    <text evidence="6 7">Down-regulated upon neuronal activity in response to an enriched environment, NMDA injection in the brain or seizures induced by kainic acid (at protein level) (PubMed:28842554). Up-regulated after social defeat stress (PubMed:30665597).</text>
</comment>
<comment type="domain">
    <text evidence="2">The chromo domain recognizes and binds histone H3K9me3, histone H3K27me2 and histone H3K27me3.</text>
</comment>
<comment type="domain">
    <text evidence="2">The acetyl-CoA-binding domain mediates crotonyl-coA hydratase activity (By similarity). The acetyl-CoA-binding domain is required for recruitment to sites of DNA double strand breaks and for binding to poly (ADP ribose) moieties (By similarity).</text>
</comment>
<comment type="caution">
    <text evidence="9">Acetyltransferase activity toward tubulin in vitro is unclear (PubMed:28681565). Crystallographic studies with the human protein demonstrated that it does not share any similarity with other acetyltransferases and instead forms a crotonase-like fold.</text>
</comment>
<dbReference type="EC" id="4.2.1.-" evidence="2"/>
<dbReference type="EC" id="2.3.1.-" evidence="9"/>
<dbReference type="EMBL" id="AC117279">
    <property type="status" value="NOT_ANNOTATED_CDS"/>
    <property type="molecule type" value="Genomic_DNA"/>
</dbReference>
<dbReference type="EMBL" id="AC140751">
    <property type="status" value="NOT_ANNOTATED_CDS"/>
    <property type="molecule type" value="Genomic_DNA"/>
</dbReference>
<dbReference type="EMBL" id="BC079003">
    <property type="protein sequence ID" value="AAH79003.1"/>
    <property type="molecule type" value="mRNA"/>
</dbReference>
<dbReference type="RefSeq" id="NP_001014167.1">
    <molecule id="Q6AYK9-1"/>
    <property type="nucleotide sequence ID" value="NM_001014145.1"/>
</dbReference>
<dbReference type="RefSeq" id="XP_038951809.1">
    <molecule id="Q6AYK9-2"/>
    <property type="nucleotide sequence ID" value="XM_039095881.2"/>
</dbReference>
<dbReference type="SMR" id="Q6AYK9"/>
<dbReference type="FunCoup" id="Q6AYK9">
    <property type="interactions" value="2087"/>
</dbReference>
<dbReference type="STRING" id="10116.ENSRNOP00000048651"/>
<dbReference type="iPTMnet" id="Q6AYK9"/>
<dbReference type="PhosphoSitePlus" id="Q6AYK9"/>
<dbReference type="PaxDb" id="10116-ENSRNOP00000048651"/>
<dbReference type="Ensembl" id="ENSRNOT00000100703.1">
    <molecule id="Q6AYK9-2"/>
    <property type="protein sequence ID" value="ENSRNOP00000095115.1"/>
    <property type="gene ID" value="ENSRNOG00000032215.4"/>
</dbReference>
<dbReference type="GeneID" id="361237"/>
<dbReference type="KEGG" id="rno:361237"/>
<dbReference type="UCSC" id="RGD:1549745">
    <molecule id="Q6AYK9-1"/>
    <property type="organism name" value="rat"/>
</dbReference>
<dbReference type="AGR" id="RGD:1549745"/>
<dbReference type="CTD" id="9425"/>
<dbReference type="RGD" id="1549745">
    <property type="gene designation" value="Cdyl"/>
</dbReference>
<dbReference type="VEuPathDB" id="HostDB:ENSRNOG00000032215"/>
<dbReference type="eggNOG" id="KOG0016">
    <property type="taxonomic scope" value="Eukaryota"/>
</dbReference>
<dbReference type="eggNOG" id="KOG1911">
    <property type="taxonomic scope" value="Eukaryota"/>
</dbReference>
<dbReference type="GeneTree" id="ENSGT00940000155106"/>
<dbReference type="HOGENOM" id="CLU_009834_24_0_1"/>
<dbReference type="InParanoid" id="Q6AYK9"/>
<dbReference type="OrthoDB" id="6357915at2759"/>
<dbReference type="PhylomeDB" id="Q6AYK9"/>
<dbReference type="TreeFam" id="TF313375"/>
<dbReference type="PRO" id="PR:Q6AYK9"/>
<dbReference type="Proteomes" id="UP000002494">
    <property type="component" value="Chromosome 17"/>
</dbReference>
<dbReference type="Bgee" id="ENSRNOG00000032215">
    <property type="expression patterns" value="Expressed in testis and 19 other cell types or tissues"/>
</dbReference>
<dbReference type="GO" id="GO:0005694">
    <property type="term" value="C:chromosome"/>
    <property type="evidence" value="ECO:0000250"/>
    <property type="project" value="UniProtKB"/>
</dbReference>
<dbReference type="GO" id="GO:0005737">
    <property type="term" value="C:cytoplasm"/>
    <property type="evidence" value="ECO:0000250"/>
    <property type="project" value="UniProtKB"/>
</dbReference>
<dbReference type="GO" id="GO:0005634">
    <property type="term" value="C:nucleus"/>
    <property type="evidence" value="ECO:0000250"/>
    <property type="project" value="UniProtKB"/>
</dbReference>
<dbReference type="GO" id="GO:0016746">
    <property type="term" value="F:acyltransferase activity"/>
    <property type="evidence" value="ECO:0007669"/>
    <property type="project" value="UniProtKB-KW"/>
</dbReference>
<dbReference type="GO" id="GO:0003682">
    <property type="term" value="F:chromatin binding"/>
    <property type="evidence" value="ECO:0000250"/>
    <property type="project" value="UniProtKB"/>
</dbReference>
<dbReference type="GO" id="GO:0120092">
    <property type="term" value="F:crotonyl-CoA hydratase activity"/>
    <property type="evidence" value="ECO:0000250"/>
    <property type="project" value="UniProtKB"/>
</dbReference>
<dbReference type="GO" id="GO:0035064">
    <property type="term" value="F:methylated histone binding"/>
    <property type="evidence" value="ECO:0000266"/>
    <property type="project" value="RGD"/>
</dbReference>
<dbReference type="GO" id="GO:0030674">
    <property type="term" value="F:protein-macromolecule adaptor activity"/>
    <property type="evidence" value="ECO:0000266"/>
    <property type="project" value="RGD"/>
</dbReference>
<dbReference type="GO" id="GO:0003714">
    <property type="term" value="F:transcription corepressor activity"/>
    <property type="evidence" value="ECO:0000250"/>
    <property type="project" value="UniProtKB"/>
</dbReference>
<dbReference type="GO" id="GO:0120094">
    <property type="term" value="P:negative regulation of peptidyl-lysine crotonylation"/>
    <property type="evidence" value="ECO:0000250"/>
    <property type="project" value="UniProtKB"/>
</dbReference>
<dbReference type="GO" id="GO:0060816">
    <property type="term" value="P:random inactivation of X chromosome"/>
    <property type="evidence" value="ECO:0000250"/>
    <property type="project" value="UniProtKB"/>
</dbReference>
<dbReference type="GO" id="GO:0007286">
    <property type="term" value="P:spermatid development"/>
    <property type="evidence" value="ECO:0000250"/>
    <property type="project" value="UniProtKB"/>
</dbReference>
<dbReference type="CDD" id="cd18634">
    <property type="entry name" value="CD_CDY"/>
    <property type="match status" value="1"/>
</dbReference>
<dbReference type="CDD" id="cd06558">
    <property type="entry name" value="crotonase-like"/>
    <property type="match status" value="1"/>
</dbReference>
<dbReference type="FunFam" id="1.10.12.10:FF:000006">
    <property type="entry name" value="Chromodomain Y-like protein"/>
    <property type="match status" value="1"/>
</dbReference>
<dbReference type="FunFam" id="3.90.226.10:FF:000012">
    <property type="entry name" value="Chromodomain Y-like protein 2"/>
    <property type="match status" value="1"/>
</dbReference>
<dbReference type="Gene3D" id="2.40.50.40">
    <property type="match status" value="1"/>
</dbReference>
<dbReference type="Gene3D" id="3.90.226.10">
    <property type="entry name" value="2-enoyl-CoA Hydratase, Chain A, domain 1"/>
    <property type="match status" value="1"/>
</dbReference>
<dbReference type="Gene3D" id="1.10.12.10">
    <property type="entry name" value="Lyase 2-enoyl-coa Hydratase, Chain A, domain 2"/>
    <property type="match status" value="1"/>
</dbReference>
<dbReference type="InterPro" id="IPR016197">
    <property type="entry name" value="Chromo-like_dom_sf"/>
</dbReference>
<dbReference type="InterPro" id="IPR000953">
    <property type="entry name" value="Chromo/chromo_shadow_dom"/>
</dbReference>
<dbReference type="InterPro" id="IPR023780">
    <property type="entry name" value="Chromo_domain"/>
</dbReference>
<dbReference type="InterPro" id="IPR023779">
    <property type="entry name" value="Chromodomain_CS"/>
</dbReference>
<dbReference type="InterPro" id="IPR029045">
    <property type="entry name" value="ClpP/crotonase-like_dom_sf"/>
</dbReference>
<dbReference type="InterPro" id="IPR051053">
    <property type="entry name" value="ECH/Chromodomain_protein"/>
</dbReference>
<dbReference type="InterPro" id="IPR001753">
    <property type="entry name" value="Enoyl-CoA_hydra/iso"/>
</dbReference>
<dbReference type="InterPro" id="IPR014748">
    <property type="entry name" value="Enoyl-CoA_hydra_C"/>
</dbReference>
<dbReference type="PANTHER" id="PTHR43684">
    <property type="match status" value="1"/>
</dbReference>
<dbReference type="PANTHER" id="PTHR43684:SF5">
    <property type="entry name" value="CHROMODOMAIN Y-LIKE PROTEIN"/>
    <property type="match status" value="1"/>
</dbReference>
<dbReference type="Pfam" id="PF00385">
    <property type="entry name" value="Chromo"/>
    <property type="match status" value="1"/>
</dbReference>
<dbReference type="Pfam" id="PF00378">
    <property type="entry name" value="ECH_1"/>
    <property type="match status" value="1"/>
</dbReference>
<dbReference type="SMART" id="SM00298">
    <property type="entry name" value="CHROMO"/>
    <property type="match status" value="1"/>
</dbReference>
<dbReference type="SUPFAM" id="SSF54160">
    <property type="entry name" value="Chromo domain-like"/>
    <property type="match status" value="1"/>
</dbReference>
<dbReference type="SUPFAM" id="SSF52096">
    <property type="entry name" value="ClpP/crotonase"/>
    <property type="match status" value="1"/>
</dbReference>
<dbReference type="PROSITE" id="PS00598">
    <property type="entry name" value="CHROMO_1"/>
    <property type="match status" value="1"/>
</dbReference>
<dbReference type="PROSITE" id="PS50013">
    <property type="entry name" value="CHROMO_2"/>
    <property type="match status" value="1"/>
</dbReference>
<reference key="1">
    <citation type="journal article" date="2004" name="Nature">
        <title>Genome sequence of the Brown Norway rat yields insights into mammalian evolution.</title>
        <authorList>
            <person name="Gibbs R.A."/>
            <person name="Weinstock G.M."/>
            <person name="Metzker M.L."/>
            <person name="Muzny D.M."/>
            <person name="Sodergren E.J."/>
            <person name="Scherer S."/>
            <person name="Scott G."/>
            <person name="Steffen D."/>
            <person name="Worley K.C."/>
            <person name="Burch P.E."/>
            <person name="Okwuonu G."/>
            <person name="Hines S."/>
            <person name="Lewis L."/>
            <person name="Deramo C."/>
            <person name="Delgado O."/>
            <person name="Dugan-Rocha S."/>
            <person name="Miner G."/>
            <person name="Morgan M."/>
            <person name="Hawes A."/>
            <person name="Gill R."/>
            <person name="Holt R.A."/>
            <person name="Adams M.D."/>
            <person name="Amanatides P.G."/>
            <person name="Baden-Tillson H."/>
            <person name="Barnstead M."/>
            <person name="Chin S."/>
            <person name="Evans C.A."/>
            <person name="Ferriera S."/>
            <person name="Fosler C."/>
            <person name="Glodek A."/>
            <person name="Gu Z."/>
            <person name="Jennings D."/>
            <person name="Kraft C.L."/>
            <person name="Nguyen T."/>
            <person name="Pfannkoch C.M."/>
            <person name="Sitter C."/>
            <person name="Sutton G.G."/>
            <person name="Venter J.C."/>
            <person name="Woodage T."/>
            <person name="Smith D."/>
            <person name="Lee H.-M."/>
            <person name="Gustafson E."/>
            <person name="Cahill P."/>
            <person name="Kana A."/>
            <person name="Doucette-Stamm L."/>
            <person name="Weinstock K."/>
            <person name="Fechtel K."/>
            <person name="Weiss R.B."/>
            <person name="Dunn D.M."/>
            <person name="Green E.D."/>
            <person name="Blakesley R.W."/>
            <person name="Bouffard G.G."/>
            <person name="De Jong P.J."/>
            <person name="Osoegawa K."/>
            <person name="Zhu B."/>
            <person name="Marra M."/>
            <person name="Schein J."/>
            <person name="Bosdet I."/>
            <person name="Fjell C."/>
            <person name="Jones S."/>
            <person name="Krzywinski M."/>
            <person name="Mathewson C."/>
            <person name="Siddiqui A."/>
            <person name="Wye N."/>
            <person name="McPherson J."/>
            <person name="Zhao S."/>
            <person name="Fraser C.M."/>
            <person name="Shetty J."/>
            <person name="Shatsman S."/>
            <person name="Geer K."/>
            <person name="Chen Y."/>
            <person name="Abramzon S."/>
            <person name="Nierman W.C."/>
            <person name="Havlak P.H."/>
            <person name="Chen R."/>
            <person name="Durbin K.J."/>
            <person name="Egan A."/>
            <person name="Ren Y."/>
            <person name="Song X.-Z."/>
            <person name="Li B."/>
            <person name="Liu Y."/>
            <person name="Qin X."/>
            <person name="Cawley S."/>
            <person name="Cooney A.J."/>
            <person name="D'Souza L.M."/>
            <person name="Martin K."/>
            <person name="Wu J.Q."/>
            <person name="Gonzalez-Garay M.L."/>
            <person name="Jackson A.R."/>
            <person name="Kalafus K.J."/>
            <person name="McLeod M.P."/>
            <person name="Milosavljevic A."/>
            <person name="Virk D."/>
            <person name="Volkov A."/>
            <person name="Wheeler D.A."/>
            <person name="Zhang Z."/>
            <person name="Bailey J.A."/>
            <person name="Eichler E.E."/>
            <person name="Tuzun E."/>
            <person name="Birney E."/>
            <person name="Mongin E."/>
            <person name="Ureta-Vidal A."/>
            <person name="Woodwark C."/>
            <person name="Zdobnov E."/>
            <person name="Bork P."/>
            <person name="Suyama M."/>
            <person name="Torrents D."/>
            <person name="Alexandersson M."/>
            <person name="Trask B.J."/>
            <person name="Young J.M."/>
            <person name="Huang H."/>
            <person name="Wang H."/>
            <person name="Xing H."/>
            <person name="Daniels S."/>
            <person name="Gietzen D."/>
            <person name="Schmidt J."/>
            <person name="Stevens K."/>
            <person name="Vitt U."/>
            <person name="Wingrove J."/>
            <person name="Camara F."/>
            <person name="Mar Alba M."/>
            <person name="Abril J.F."/>
            <person name="Guigo R."/>
            <person name="Smit A."/>
            <person name="Dubchak I."/>
            <person name="Rubin E.M."/>
            <person name="Couronne O."/>
            <person name="Poliakov A."/>
            <person name="Huebner N."/>
            <person name="Ganten D."/>
            <person name="Goesele C."/>
            <person name="Hummel O."/>
            <person name="Kreitler T."/>
            <person name="Lee Y.-A."/>
            <person name="Monti J."/>
            <person name="Schulz H."/>
            <person name="Zimdahl H."/>
            <person name="Himmelbauer H."/>
            <person name="Lehrach H."/>
            <person name="Jacob H.J."/>
            <person name="Bromberg S."/>
            <person name="Gullings-Handley J."/>
            <person name="Jensen-Seaman M.I."/>
            <person name="Kwitek A.E."/>
            <person name="Lazar J."/>
            <person name="Pasko D."/>
            <person name="Tonellato P.J."/>
            <person name="Twigger S."/>
            <person name="Ponting C.P."/>
            <person name="Duarte J.M."/>
            <person name="Rice S."/>
            <person name="Goodstadt L."/>
            <person name="Beatson S.A."/>
            <person name="Emes R.D."/>
            <person name="Winter E.E."/>
            <person name="Webber C."/>
            <person name="Brandt P."/>
            <person name="Nyakatura G."/>
            <person name="Adetobi M."/>
            <person name="Chiaromonte F."/>
            <person name="Elnitski L."/>
            <person name="Eswara P."/>
            <person name="Hardison R.C."/>
            <person name="Hou M."/>
            <person name="Kolbe D."/>
            <person name="Makova K."/>
            <person name="Miller W."/>
            <person name="Nekrutenko A."/>
            <person name="Riemer C."/>
            <person name="Schwartz S."/>
            <person name="Taylor J."/>
            <person name="Yang S."/>
            <person name="Zhang Y."/>
            <person name="Lindpaintner K."/>
            <person name="Andrews T.D."/>
            <person name="Caccamo M."/>
            <person name="Clamp M."/>
            <person name="Clarke L."/>
            <person name="Curwen V."/>
            <person name="Durbin R.M."/>
            <person name="Eyras E."/>
            <person name="Searle S.M."/>
            <person name="Cooper G.M."/>
            <person name="Batzoglou S."/>
            <person name="Brudno M."/>
            <person name="Sidow A."/>
            <person name="Stone E.A."/>
            <person name="Payseur B.A."/>
            <person name="Bourque G."/>
            <person name="Lopez-Otin C."/>
            <person name="Puente X.S."/>
            <person name="Chakrabarti K."/>
            <person name="Chatterji S."/>
            <person name="Dewey C."/>
            <person name="Pachter L."/>
            <person name="Bray N."/>
            <person name="Yap V.B."/>
            <person name="Caspi A."/>
            <person name="Tesler G."/>
            <person name="Pevzner P.A."/>
            <person name="Haussler D."/>
            <person name="Roskin K.M."/>
            <person name="Baertsch R."/>
            <person name="Clawson H."/>
            <person name="Furey T.S."/>
            <person name="Hinrichs A.S."/>
            <person name="Karolchik D."/>
            <person name="Kent W.J."/>
            <person name="Rosenbloom K.R."/>
            <person name="Trumbower H."/>
            <person name="Weirauch M."/>
            <person name="Cooper D.N."/>
            <person name="Stenson P.D."/>
            <person name="Ma B."/>
            <person name="Brent M."/>
            <person name="Arumugam M."/>
            <person name="Shteynberg D."/>
            <person name="Copley R.R."/>
            <person name="Taylor M.S."/>
            <person name="Riethman H."/>
            <person name="Mudunuri U."/>
            <person name="Peterson J."/>
            <person name="Guyer M."/>
            <person name="Felsenfeld A."/>
            <person name="Old S."/>
            <person name="Mockrin S."/>
            <person name="Collins F.S."/>
        </authorList>
    </citation>
    <scope>NUCLEOTIDE SEQUENCE [LARGE SCALE GENOMIC DNA]</scope>
    <source>
        <strain>Brown Norway</strain>
    </source>
</reference>
<reference key="2">
    <citation type="journal article" date="2004" name="Genome Res.">
        <title>The status, quality, and expansion of the NIH full-length cDNA project: the Mammalian Gene Collection (MGC).</title>
        <authorList>
            <consortium name="The MGC Project Team"/>
        </authorList>
    </citation>
    <scope>NUCLEOTIDE SEQUENCE [LARGE SCALE MRNA]</scope>
    <source>
        <tissue>Testis</tissue>
    </source>
</reference>
<reference key="3">
    <citation type="journal article" date="2012" name="Nat. Commun.">
        <title>Quantitative maps of protein phosphorylation sites across 14 different rat organs and tissues.</title>
        <authorList>
            <person name="Lundby A."/>
            <person name="Secher A."/>
            <person name="Lage K."/>
            <person name="Nordsborg N.B."/>
            <person name="Dmytriyev A."/>
            <person name="Lundby C."/>
            <person name="Olsen J.V."/>
        </authorList>
    </citation>
    <scope>PHOSPHORYLATION [LARGE SCALE ANALYSIS] AT SER-82 AND SER-210</scope>
    <scope>IDENTIFICATION BY MASS SPECTROMETRY [LARGE SCALE ANALYSIS]</scope>
</reference>
<reference key="4">
    <citation type="journal article" date="2017" name="Cytoskeleton">
        <title>Tubulin acetylation: A novel functional avenue for CDYL in sperm.</title>
        <authorList>
            <person name="Parab S."/>
            <person name="Dalvi V."/>
            <person name="Mylavaram S."/>
            <person name="Kishore A."/>
            <person name="Idicula-Thomas S."/>
            <person name="Sonawane S."/>
            <person name="Parte P."/>
        </authorList>
    </citation>
    <scope>PUTATIVE FUNCTION</scope>
</reference>
<reference key="5">
    <citation type="journal article" date="2017" name="Nat. Commun.">
        <title>CDYL suppresses epileptogenesis in mice through repression of axonal Nav1.6 sodium channel expression.</title>
        <authorList>
            <person name="Liu Y."/>
            <person name="Lai S."/>
            <person name="Ma W."/>
            <person name="Ke W."/>
            <person name="Zhang C."/>
            <person name="Liu S."/>
            <person name="Zhang Y."/>
            <person name="Pei F."/>
            <person name="Li S."/>
            <person name="Yi M."/>
            <person name="Shu Y."/>
            <person name="Shang Y."/>
            <person name="Liang J."/>
            <person name="Huang Z."/>
        </authorList>
    </citation>
    <scope>FUNCTION</scope>
    <scope>TISSUE SPECIFICITY</scope>
    <scope>REPRESSION BY NEURONAL ACTIVITY</scope>
</reference>
<reference key="6">
    <citation type="journal article" date="2019" name="Biol. Psychiatry">
        <title>Chromodomain Y-like Protein-Mediated Histone Crotonylation Regulates Stress-Induced Depressive Behaviors.</title>
        <authorList>
            <person name="Liu Y."/>
            <person name="Li M."/>
            <person name="Fan M."/>
            <person name="Song Y."/>
            <person name="Yu H."/>
            <person name="Zhi X."/>
            <person name="Xiao K."/>
            <person name="Lai S."/>
            <person name="Zhang J."/>
            <person name="Jin X."/>
            <person name="Shang Y."/>
            <person name="Liang J."/>
            <person name="Huang Z."/>
        </authorList>
    </citation>
    <scope>TISSUE SPECIFICITY</scope>
    <scope>INDUCTION BY SOCIAL DEFEAT STRESS</scope>
</reference>
<proteinExistence type="evidence at protein level"/>
<evidence type="ECO:0000250" key="1">
    <source>
        <dbReference type="UniProtKB" id="Q9WTK2"/>
    </source>
</evidence>
<evidence type="ECO:0000250" key="2">
    <source>
        <dbReference type="UniProtKB" id="Q9Y232"/>
    </source>
</evidence>
<evidence type="ECO:0000255" key="3"/>
<evidence type="ECO:0000255" key="4">
    <source>
        <dbReference type="PROSITE-ProRule" id="PRU00053"/>
    </source>
</evidence>
<evidence type="ECO:0000256" key="5">
    <source>
        <dbReference type="SAM" id="MobiDB-lite"/>
    </source>
</evidence>
<evidence type="ECO:0000269" key="6">
    <source>
    </source>
</evidence>
<evidence type="ECO:0000269" key="7">
    <source>
    </source>
</evidence>
<evidence type="ECO:0000305" key="8"/>
<evidence type="ECO:0000305" key="9">
    <source>
    </source>
</evidence>
<evidence type="ECO:0000312" key="10">
    <source>
        <dbReference type="RGD" id="1549745"/>
    </source>
</evidence>
<evidence type="ECO:0007744" key="11">
    <source>
    </source>
</evidence>
<keyword id="KW-0012">Acyltransferase</keyword>
<keyword id="KW-0025">Alternative splicing</keyword>
<keyword id="KW-0158">Chromosome</keyword>
<keyword id="KW-0221">Differentiation</keyword>
<keyword id="KW-0456">Lyase</keyword>
<keyword id="KW-0488">Methylation</keyword>
<keyword id="KW-0539">Nucleus</keyword>
<keyword id="KW-0597">Phosphoprotein</keyword>
<keyword id="KW-1185">Reference proteome</keyword>
<keyword id="KW-0678">Repressor</keyword>
<keyword id="KW-0744">Spermatogenesis</keyword>
<keyword id="KW-0804">Transcription</keyword>
<keyword id="KW-0805">Transcription regulation</keyword>
<keyword id="KW-0808">Transferase</keyword>
<accession>Q6AYK9</accession>
<name>CDYL_RAT</name>
<feature type="chain" id="PRO_0000292138" description="Chromodomain Y-like protein">
    <location>
        <begin position="1"/>
        <end position="589"/>
    </location>
</feature>
<feature type="domain" description="Chromo" evidence="4">
    <location>
        <begin position="55"/>
        <end position="115"/>
    </location>
</feature>
<feature type="region of interest" description="Disordered" evidence="5">
    <location>
        <begin position="1"/>
        <end position="57"/>
    </location>
</feature>
<feature type="region of interest" description="Interaction with EZH2" evidence="2">
    <location>
        <begin position="55"/>
        <end position="300"/>
    </location>
</feature>
<feature type="region of interest" description="Disordered" evidence="5">
    <location>
        <begin position="110"/>
        <end position="155"/>
    </location>
</feature>
<feature type="region of interest" description="Disordered" evidence="5">
    <location>
        <begin position="202"/>
        <end position="224"/>
    </location>
</feature>
<feature type="region of interest" description="Acetyl-CoA-binding domain" evidence="3">
    <location>
        <begin position="353"/>
        <end position="585"/>
    </location>
</feature>
<feature type="compositionally biased region" description="Polar residues" evidence="5">
    <location>
        <begin position="1"/>
        <end position="10"/>
    </location>
</feature>
<feature type="compositionally biased region" description="Basic and acidic residues" evidence="5">
    <location>
        <begin position="11"/>
        <end position="30"/>
    </location>
</feature>
<feature type="compositionally biased region" description="Low complexity" evidence="5">
    <location>
        <begin position="117"/>
        <end position="128"/>
    </location>
</feature>
<feature type="compositionally biased region" description="Polar residues" evidence="5">
    <location>
        <begin position="132"/>
        <end position="143"/>
    </location>
</feature>
<feature type="compositionally biased region" description="Basic and acidic residues" evidence="5">
    <location>
        <begin position="206"/>
        <end position="216"/>
    </location>
</feature>
<feature type="modified residue" description="Phosphoserine" evidence="11">
    <location>
        <position position="82"/>
    </location>
</feature>
<feature type="modified residue" description="N6,N6,N6-trimethyllysine; by EHMT2; alternate" evidence="2">
    <location>
        <position position="129"/>
    </location>
</feature>
<feature type="modified residue" description="N6,N6-dimethyllysine; by EHMT2; alternate" evidence="2">
    <location>
        <position position="129"/>
    </location>
</feature>
<feature type="modified residue" description="N6-methyllysine; by EHMT2; alternate" evidence="2">
    <location>
        <position position="129"/>
    </location>
</feature>
<feature type="modified residue" description="Phosphoserine" evidence="2">
    <location>
        <position position="164"/>
    </location>
</feature>
<feature type="modified residue" description="Phosphoserine" evidence="2">
    <location>
        <position position="195"/>
    </location>
</feature>
<feature type="modified residue" description="Phosphoserine" evidence="11">
    <location>
        <position position="210"/>
    </location>
</feature>
<feature type="splice variant" id="VSP_059157" description="In isoform 2.">
    <original>MGLGSSQPSTKEAEPCTLQEKEEHPVDDTRQQNNAVPATVSDPDQVSPAVQDAETQ</original>
    <variation>MASEELYE</variation>
    <location>
        <begin position="1"/>
        <end position="56"/>
    </location>
</feature>